<keyword id="KW-1003">Cell membrane</keyword>
<keyword id="KW-0325">Glycoprotein</keyword>
<keyword id="KW-0472">Membrane</keyword>
<keyword id="KW-1185">Reference proteome</keyword>
<keyword id="KW-0735">Signal-anchor</keyword>
<keyword id="KW-0812">Transmembrane</keyword>
<keyword id="KW-1133">Transmembrane helix</keyword>
<evidence type="ECO:0000250" key="1"/>
<evidence type="ECO:0000255" key="2"/>
<protein>
    <recommendedName>
        <fullName>Kita-kyushu lung cancer antigen 1 homolog</fullName>
    </recommendedName>
</protein>
<comment type="subcellular location">
    <subcellularLocation>
        <location evidence="1">Cell membrane</location>
        <topology evidence="1">Single-pass type II membrane protein</topology>
    </subcellularLocation>
</comment>
<reference key="1">
    <citation type="submission" date="2005-06" db="EMBL/GenBank/DDBJ databases">
        <title>DNA sequences of macaque genes expressed in brain or testis and its evolutionary implications.</title>
        <authorList>
            <consortium name="International consortium for macaque cDNA sequencing and analysis"/>
        </authorList>
    </citation>
    <scope>NUCLEOTIDE SEQUENCE [LARGE SCALE MRNA]</scope>
    <source>
        <tissue>Testis</tissue>
    </source>
</reference>
<organism>
    <name type="scientific">Macaca fascicularis</name>
    <name type="common">Crab-eating macaque</name>
    <name type="synonym">Cynomolgus monkey</name>
    <dbReference type="NCBI Taxonomy" id="9541"/>
    <lineage>
        <taxon>Eukaryota</taxon>
        <taxon>Metazoa</taxon>
        <taxon>Chordata</taxon>
        <taxon>Craniata</taxon>
        <taxon>Vertebrata</taxon>
        <taxon>Euteleostomi</taxon>
        <taxon>Mammalia</taxon>
        <taxon>Eutheria</taxon>
        <taxon>Euarchontoglires</taxon>
        <taxon>Primates</taxon>
        <taxon>Haplorrhini</taxon>
        <taxon>Catarrhini</taxon>
        <taxon>Cercopithecidae</taxon>
        <taxon>Cercopithecinae</taxon>
        <taxon>Macaca</taxon>
    </lineage>
</organism>
<gene>
    <name type="primary">CT83</name>
    <name type="synonym">KKLC1</name>
    <name type="ORF">QtsA-16557</name>
</gene>
<dbReference type="EMBL" id="AB169012">
    <property type="protein sequence ID" value="BAE01107.1"/>
    <property type="molecule type" value="mRNA"/>
</dbReference>
<dbReference type="RefSeq" id="NP_001270680.1">
    <property type="nucleotide sequence ID" value="NM_001283751.1"/>
</dbReference>
<dbReference type="RefSeq" id="XP_045239547.1">
    <property type="nucleotide sequence ID" value="XM_045383612.2"/>
</dbReference>
<dbReference type="SMR" id="Q4R717"/>
<dbReference type="STRING" id="9541.ENSMFAP00000044998"/>
<dbReference type="GlyCosmos" id="Q4R717">
    <property type="glycosylation" value="1 site, No reported glycans"/>
</dbReference>
<dbReference type="GeneID" id="101867354"/>
<dbReference type="VEuPathDB" id="HostDB:ENSMFAG00000000247"/>
<dbReference type="eggNOG" id="ENOG502TE5A">
    <property type="taxonomic scope" value="Eukaryota"/>
</dbReference>
<dbReference type="OMA" id="MEHFLIT"/>
<dbReference type="Proteomes" id="UP000233100">
    <property type="component" value="Chromosome X"/>
</dbReference>
<dbReference type="GO" id="GO:0005886">
    <property type="term" value="C:plasma membrane"/>
    <property type="evidence" value="ECO:0007669"/>
    <property type="project" value="UniProtKB-SubCell"/>
</dbReference>
<dbReference type="InterPro" id="IPR027940">
    <property type="entry name" value="KKLCAg1"/>
</dbReference>
<dbReference type="PANTHER" id="PTHR38650">
    <property type="entry name" value="KITA-KYUSHU LUNG CANCER ANTIGEN 1"/>
    <property type="match status" value="1"/>
</dbReference>
<dbReference type="PANTHER" id="PTHR38650:SF1">
    <property type="entry name" value="KITA-KYUSHU LUNG CANCER ANTIGEN 1"/>
    <property type="match status" value="1"/>
</dbReference>
<dbReference type="Pfam" id="PF15204">
    <property type="entry name" value="KKLCAg1"/>
    <property type="match status" value="1"/>
</dbReference>
<sequence>MNVYLLLASGILCALMTVFWKYRRFQRNTGEMSSNSTALALVRPSSTGLINSNTDNNLSVYDLSRDILNNFPHSIAMQKRILVNLTTVENKLVELEHILVSKGFRSASAHRKST</sequence>
<accession>Q4R717</accession>
<feature type="chain" id="PRO_0000293737" description="Kita-kyushu lung cancer antigen 1 homolog">
    <location>
        <begin position="1"/>
        <end position="114"/>
    </location>
</feature>
<feature type="topological domain" description="Cytoplasmic" evidence="2">
    <location>
        <begin position="1"/>
        <end position="4"/>
    </location>
</feature>
<feature type="transmembrane region" description="Helical; Signal-anchor for type II membrane protein" evidence="2">
    <location>
        <begin position="5"/>
        <end position="22"/>
    </location>
</feature>
<feature type="topological domain" description="Extracellular" evidence="2">
    <location>
        <begin position="23"/>
        <end position="114"/>
    </location>
</feature>
<feature type="glycosylation site" description="N-linked (GlcNAc...) asparagine" evidence="2">
    <location>
        <position position="84"/>
    </location>
</feature>
<name>KKLC1_MACFA</name>
<proteinExistence type="inferred from homology"/>